<gene>
    <name type="primary">IML2</name>
    <name type="ordered locus">DEHA2B01254g</name>
</gene>
<reference key="1">
    <citation type="journal article" date="2004" name="Nature">
        <title>Genome evolution in yeasts.</title>
        <authorList>
            <person name="Dujon B."/>
            <person name="Sherman D."/>
            <person name="Fischer G."/>
            <person name="Durrens P."/>
            <person name="Casaregola S."/>
            <person name="Lafontaine I."/>
            <person name="de Montigny J."/>
            <person name="Marck C."/>
            <person name="Neuveglise C."/>
            <person name="Talla E."/>
            <person name="Goffard N."/>
            <person name="Frangeul L."/>
            <person name="Aigle M."/>
            <person name="Anthouard V."/>
            <person name="Babour A."/>
            <person name="Barbe V."/>
            <person name="Barnay S."/>
            <person name="Blanchin S."/>
            <person name="Beckerich J.-M."/>
            <person name="Beyne E."/>
            <person name="Bleykasten C."/>
            <person name="Boisrame A."/>
            <person name="Boyer J."/>
            <person name="Cattolico L."/>
            <person name="Confanioleri F."/>
            <person name="de Daruvar A."/>
            <person name="Despons L."/>
            <person name="Fabre E."/>
            <person name="Fairhead C."/>
            <person name="Ferry-Dumazet H."/>
            <person name="Groppi A."/>
            <person name="Hantraye F."/>
            <person name="Hennequin C."/>
            <person name="Jauniaux N."/>
            <person name="Joyet P."/>
            <person name="Kachouri R."/>
            <person name="Kerrest A."/>
            <person name="Koszul R."/>
            <person name="Lemaire M."/>
            <person name="Lesur I."/>
            <person name="Ma L."/>
            <person name="Muller H."/>
            <person name="Nicaud J.-M."/>
            <person name="Nikolski M."/>
            <person name="Oztas S."/>
            <person name="Ozier-Kalogeropoulos O."/>
            <person name="Pellenz S."/>
            <person name="Potier S."/>
            <person name="Richard G.-F."/>
            <person name="Straub M.-L."/>
            <person name="Suleau A."/>
            <person name="Swennen D."/>
            <person name="Tekaia F."/>
            <person name="Wesolowski-Louvel M."/>
            <person name="Westhof E."/>
            <person name="Wirth B."/>
            <person name="Zeniou-Meyer M."/>
            <person name="Zivanovic Y."/>
            <person name="Bolotin-Fukuhara M."/>
            <person name="Thierry A."/>
            <person name="Bouchier C."/>
            <person name="Caudron B."/>
            <person name="Scarpelli C."/>
            <person name="Gaillardin C."/>
            <person name="Weissenbach J."/>
            <person name="Wincker P."/>
            <person name="Souciet J.-L."/>
        </authorList>
    </citation>
    <scope>NUCLEOTIDE SEQUENCE [LARGE SCALE GENOMIC DNA]</scope>
    <source>
        <strain>ATCC 36239 / CBS 767 / BCRC 21394 / JCM 1990 / NBRC 0083 / IGC 2968</strain>
    </source>
</reference>
<name>IML2_DEBHA</name>
<dbReference type="EMBL" id="CR382134">
    <property type="protein sequence ID" value="CAG85006.2"/>
    <property type="molecule type" value="Genomic_DNA"/>
</dbReference>
<dbReference type="RefSeq" id="XP_457021.2">
    <property type="nucleotide sequence ID" value="XM_457021.1"/>
</dbReference>
<dbReference type="FunCoup" id="Q6BXP8">
    <property type="interactions" value="144"/>
</dbReference>
<dbReference type="GeneID" id="2913724"/>
<dbReference type="KEGG" id="dha:DEHA2B01254g"/>
<dbReference type="VEuPathDB" id="FungiDB:DEHA2B01254g"/>
<dbReference type="eggNOG" id="KOG3783">
    <property type="taxonomic scope" value="Eukaryota"/>
</dbReference>
<dbReference type="HOGENOM" id="CLU_014926_0_0_1"/>
<dbReference type="InParanoid" id="Q6BXP8"/>
<dbReference type="OMA" id="WNGYNRM"/>
<dbReference type="OrthoDB" id="2154985at2759"/>
<dbReference type="Proteomes" id="UP000000599">
    <property type="component" value="Chromosome B"/>
</dbReference>
<dbReference type="GO" id="GO:0005829">
    <property type="term" value="C:cytosol"/>
    <property type="evidence" value="ECO:0007669"/>
    <property type="project" value="TreeGrafter"/>
</dbReference>
<dbReference type="GO" id="GO:0005741">
    <property type="term" value="C:mitochondrial outer membrane"/>
    <property type="evidence" value="ECO:0007669"/>
    <property type="project" value="TreeGrafter"/>
</dbReference>
<dbReference type="GO" id="GO:0005634">
    <property type="term" value="C:nucleus"/>
    <property type="evidence" value="ECO:0007669"/>
    <property type="project" value="UniProtKB-SubCell"/>
</dbReference>
<dbReference type="InterPro" id="IPR019412">
    <property type="entry name" value="Iml2/TPR_39"/>
</dbReference>
<dbReference type="InterPro" id="IPR011990">
    <property type="entry name" value="TPR-like_helical_dom_sf"/>
</dbReference>
<dbReference type="PANTHER" id="PTHR31859">
    <property type="entry name" value="TETRATRICOPEPTIDE REPEAT PROTEIN 39 FAMILY MEMBER"/>
    <property type="match status" value="1"/>
</dbReference>
<dbReference type="PANTHER" id="PTHR31859:SF1">
    <property type="entry name" value="TETRATRICOPEPTIDE REPEAT PROTEIN 39C"/>
    <property type="match status" value="1"/>
</dbReference>
<dbReference type="Pfam" id="PF10300">
    <property type="entry name" value="Iml2-TPR_39"/>
    <property type="match status" value="1"/>
</dbReference>
<dbReference type="SUPFAM" id="SSF48452">
    <property type="entry name" value="TPR-like"/>
    <property type="match status" value="1"/>
</dbReference>
<evidence type="ECO:0000250" key="1">
    <source>
        <dbReference type="UniProtKB" id="P47031"/>
    </source>
</evidence>
<evidence type="ECO:0000256" key="2">
    <source>
        <dbReference type="SAM" id="MobiDB-lite"/>
    </source>
</evidence>
<evidence type="ECO:0000305" key="3"/>
<proteinExistence type="inferred from homology"/>
<keyword id="KW-0963">Cytoplasm</keyword>
<keyword id="KW-0539">Nucleus</keyword>
<keyword id="KW-0597">Phosphoprotein</keyword>
<keyword id="KW-1185">Reference proteome</keyword>
<organism>
    <name type="scientific">Debaryomyces hansenii (strain ATCC 36239 / CBS 767 / BCRC 21394 / JCM 1990 / NBRC 0083 / IGC 2968)</name>
    <name type="common">Yeast</name>
    <name type="synonym">Torulaspora hansenii</name>
    <dbReference type="NCBI Taxonomy" id="284592"/>
    <lineage>
        <taxon>Eukaryota</taxon>
        <taxon>Fungi</taxon>
        <taxon>Dikarya</taxon>
        <taxon>Ascomycota</taxon>
        <taxon>Saccharomycotina</taxon>
        <taxon>Pichiomycetes</taxon>
        <taxon>Debaryomycetaceae</taxon>
        <taxon>Debaryomyces</taxon>
    </lineage>
</organism>
<comment type="function">
    <text evidence="1">Inclusion body (IB) resident protein that interacts strongly with lipid droplet (LD) proteins. Involved in LD-mediated IB clearing after protein folding stress, probably by enabling access to the IBs of an LD-stored soluble sterol derivative that acts as a chaperone in inclusion clearing.</text>
</comment>
<comment type="subunit">
    <text evidence="1">Interacts with lipid droplet proteins.</text>
</comment>
<comment type="subcellular location">
    <subcellularLocation>
        <location evidence="1">Cytoplasm</location>
    </subcellularLocation>
    <subcellularLocation>
        <location evidence="1">Nucleus</location>
    </subcellularLocation>
    <text evidence="1">Localized exclusively in cytoplasmic inclusion bodies under protein folding stress conditions.</text>
</comment>
<comment type="similarity">
    <text evidence="3">Belongs to the IML2 family.</text>
</comment>
<feature type="chain" id="PRO_0000333348" description="Inclusion body clearance protein IML2">
    <location>
        <begin position="1"/>
        <end position="886"/>
    </location>
</feature>
<feature type="region of interest" description="Disordered" evidence="2">
    <location>
        <begin position="207"/>
        <end position="238"/>
    </location>
</feature>
<feature type="region of interest" description="Disordered" evidence="2">
    <location>
        <begin position="287"/>
        <end position="335"/>
    </location>
</feature>
<feature type="compositionally biased region" description="Polar residues" evidence="2">
    <location>
        <begin position="210"/>
        <end position="219"/>
    </location>
</feature>
<feature type="compositionally biased region" description="Low complexity" evidence="2">
    <location>
        <begin position="224"/>
        <end position="237"/>
    </location>
</feature>
<feature type="compositionally biased region" description="Low complexity" evidence="2">
    <location>
        <begin position="287"/>
        <end position="297"/>
    </location>
</feature>
<feature type="compositionally biased region" description="Polar residues" evidence="2">
    <location>
        <begin position="304"/>
        <end position="313"/>
    </location>
</feature>
<feature type="compositionally biased region" description="Acidic residues" evidence="2">
    <location>
        <begin position="322"/>
        <end position="335"/>
    </location>
</feature>
<sequence>MFKGLRKKASALSLYSQPTRAGGMANDPSSYDKILKQVHDFETAFKAMDYLLDDRTQDGIDLLQEQQKRHVKTESQQPAAIFPLALGVMEFIEATLGFEPEVMERAHQTLSEAEAASMNNVKYNVRYSLGTSHIYPPGTEFQVTNAESTLLNALLMLLQESNGVVESAKALFKLRKAYQTLDSIYKKIKESEPVFNKNLAKLKKEASLQHEGNSANVSTVDLPGYSNQSSRGGSSASLPQDVKLLKNLETVYQMRKSRIEGTSLNDPSQALNVNMYAATSSGESSVSVASAVNSDSGGRPESPRATTLSQNAKFRNPIPSSADDEFDDEDDEFSDASDTFHSFGNLSIPHSMHKSSSLANSQVLDNAESFVSGANSSSISLRNSDQEDNHMHVSTVDEYIHSGVQLCFGILQVVLSLIPPTIGKVLSIVGFRGDRETGLKMLWRTAITSRNIHGELALLCLLVFYDGPIQFIDDGYQLPGQEDANVSEVISIDKKSNISDKELEIILKNPALYTPQLLTKVRGYFPHNALWLLQEGRMLAAQGQLVKAATLMQSFTDNPETKINMQQVEALLIFDRAMLYAFKHDYDEAARDFIYLLDINSWSKSIYLFFAGSCYLEKWRMIKLGMIEVEDREKSLKYYGDQAELYLKKAPTYVPGHGINASNKKGGIGGGNKQMPFDKFLLRKLQHIENCQKKHPKLSFLNCFGTSPIHELIYFWNGYNRMNETELKLTLTLLGYSGAVNSDYSANNNEQNFAKFEENEDEAMIRYLFQSITLRSLNRLSEGVSLLDSHVISKFVTQDSPNMPFKFIKMTYSPYLYPTALYERSMFVWLLRTSKKSANLREAIEESKSWLKKSEMVGDGDYELSNRTGMKIKAAGDRLDQFKTQI</sequence>
<accession>Q6BXP8</accession>
<protein>
    <recommendedName>
        <fullName>Inclusion body clearance protein IML2</fullName>
    </recommendedName>
</protein>